<reference key="1">
    <citation type="submission" date="2006-10" db="EMBL/GenBank/DDBJ databases">
        <authorList>
            <consortium name="Sanger Xenopus tropicalis EST/cDNA project"/>
        </authorList>
    </citation>
    <scope>NUCLEOTIDE SEQUENCE [LARGE SCALE MRNA] (ISOFORM 1)</scope>
    <source>
        <tissue>Neurula</tissue>
    </source>
</reference>
<reference key="2">
    <citation type="submission" date="2005-02" db="EMBL/GenBank/DDBJ databases">
        <authorList>
            <consortium name="NIH - Xenopus Gene Collection (XGC) project"/>
        </authorList>
    </citation>
    <scope>NUCLEOTIDE SEQUENCE [LARGE SCALE MRNA] OF 2-224 (ISOFORM 2)</scope>
    <source>
        <tissue>Embryo</tissue>
    </source>
</reference>
<keyword id="KW-0025">Alternative splicing</keyword>
<keyword id="KW-0963">Cytoplasm</keyword>
<keyword id="KW-0206">Cytoskeleton</keyword>
<keyword id="KW-0489">Methyltransferase</keyword>
<keyword id="KW-1185">Reference proteome</keyword>
<keyword id="KW-0949">S-adenosyl-L-methionine</keyword>
<keyword id="KW-0808">Transferase</keyword>
<accession>Q28IN4</accession>
<accession>Q5FVB9</accession>
<dbReference type="EC" id="2.1.1.-" evidence="1"/>
<dbReference type="EMBL" id="CR760304">
    <property type="protein sequence ID" value="CAJ82348.1"/>
    <property type="molecule type" value="mRNA"/>
</dbReference>
<dbReference type="EMBL" id="BC090083">
    <property type="protein sequence ID" value="AAH90083.1"/>
    <property type="molecule type" value="mRNA"/>
</dbReference>
<dbReference type="RefSeq" id="NP_001016660.1">
    <molecule id="Q28IN4-1"/>
    <property type="nucleotide sequence ID" value="NM_001016660.2"/>
</dbReference>
<dbReference type="SMR" id="Q28IN4"/>
<dbReference type="FunCoup" id="Q28IN4">
    <property type="interactions" value="239"/>
</dbReference>
<dbReference type="STRING" id="8364.ENSXETP00000014446"/>
<dbReference type="PaxDb" id="8364-ENSXETP00000021254"/>
<dbReference type="DNASU" id="549414"/>
<dbReference type="GeneID" id="549414"/>
<dbReference type="KEGG" id="xtr:549414"/>
<dbReference type="AGR" id="Xenbase:XB-GENE-5830044"/>
<dbReference type="CTD" id="25895"/>
<dbReference type="Xenbase" id="XB-GENE-5830044">
    <property type="gene designation" value="eef1akmt3"/>
</dbReference>
<dbReference type="eggNOG" id="KOG2793">
    <property type="taxonomic scope" value="Eukaryota"/>
</dbReference>
<dbReference type="HOGENOM" id="CLU_055721_4_0_1"/>
<dbReference type="InParanoid" id="Q28IN4"/>
<dbReference type="OMA" id="HRDDKQN"/>
<dbReference type="OrthoDB" id="413520at2759"/>
<dbReference type="PhylomeDB" id="Q28IN4"/>
<dbReference type="TreeFam" id="TF313206"/>
<dbReference type="Proteomes" id="UP000008143">
    <property type="component" value="Chromosome 2"/>
</dbReference>
<dbReference type="Bgee" id="ENSXETG00000009654">
    <property type="expression patterns" value="Expressed in gastrula and 12 other cell types or tissues"/>
</dbReference>
<dbReference type="ExpressionAtlas" id="Q28IN4">
    <property type="expression patterns" value="differential"/>
</dbReference>
<dbReference type="GO" id="GO:0005813">
    <property type="term" value="C:centrosome"/>
    <property type="evidence" value="ECO:0000250"/>
    <property type="project" value="UniProtKB"/>
</dbReference>
<dbReference type="GO" id="GO:0005737">
    <property type="term" value="C:cytoplasm"/>
    <property type="evidence" value="ECO:0000250"/>
    <property type="project" value="UniProtKB"/>
</dbReference>
<dbReference type="GO" id="GO:0008168">
    <property type="term" value="F:methyltransferase activity"/>
    <property type="evidence" value="ECO:0000250"/>
    <property type="project" value="UniProtKB"/>
</dbReference>
<dbReference type="GO" id="GO:0016279">
    <property type="term" value="F:protein-lysine N-methyltransferase activity"/>
    <property type="evidence" value="ECO:0000250"/>
    <property type="project" value="UniProtKB"/>
</dbReference>
<dbReference type="GO" id="GO:0018022">
    <property type="term" value="P:peptidyl-lysine methylation"/>
    <property type="evidence" value="ECO:0000250"/>
    <property type="project" value="UniProtKB"/>
</dbReference>
<dbReference type="CDD" id="cd02440">
    <property type="entry name" value="AdoMet_MTases"/>
    <property type="match status" value="1"/>
</dbReference>
<dbReference type="FunFam" id="3.40.50.150:FF:000160">
    <property type="entry name" value="EEF1A lysine methyltransferase 3"/>
    <property type="match status" value="1"/>
</dbReference>
<dbReference type="Gene3D" id="3.40.50.150">
    <property type="entry name" value="Vaccinia Virus protein VP39"/>
    <property type="match status" value="1"/>
</dbReference>
<dbReference type="InterPro" id="IPR019410">
    <property type="entry name" value="Methyltransf_16"/>
</dbReference>
<dbReference type="InterPro" id="IPR029063">
    <property type="entry name" value="SAM-dependent_MTases_sf"/>
</dbReference>
<dbReference type="PANTHER" id="PTHR14614:SF5">
    <property type="entry name" value="EEF1A LYSINE METHYLTRANSFERASE 3"/>
    <property type="match status" value="1"/>
</dbReference>
<dbReference type="PANTHER" id="PTHR14614">
    <property type="entry name" value="HEPATOCELLULAR CARCINOMA-ASSOCIATED ANTIGEN"/>
    <property type="match status" value="1"/>
</dbReference>
<dbReference type="Pfam" id="PF10294">
    <property type="entry name" value="Methyltransf_16"/>
    <property type="match status" value="1"/>
</dbReference>
<dbReference type="SUPFAM" id="SSF53335">
    <property type="entry name" value="S-adenosyl-L-methionine-dependent methyltransferases"/>
    <property type="match status" value="1"/>
</dbReference>
<protein>
    <recommendedName>
        <fullName evidence="1">EEF1A lysine methyltransferase 3</fullName>
        <ecNumber evidence="1">2.1.1.-</ecNumber>
    </recommendedName>
    <alternativeName>
        <fullName>Methyltransferase-like protein 21B</fullName>
    </alternativeName>
    <alternativeName>
        <fullName evidence="1">Protein-lysine methyltransferase METTL21B</fullName>
    </alternativeName>
</protein>
<evidence type="ECO:0000250" key="1">
    <source>
        <dbReference type="UniProtKB" id="Q96AZ1"/>
    </source>
</evidence>
<evidence type="ECO:0000303" key="2">
    <source ref="2"/>
</evidence>
<evidence type="ECO:0000305" key="3"/>
<organism>
    <name type="scientific">Xenopus tropicalis</name>
    <name type="common">Western clawed frog</name>
    <name type="synonym">Silurana tropicalis</name>
    <dbReference type="NCBI Taxonomy" id="8364"/>
    <lineage>
        <taxon>Eukaryota</taxon>
        <taxon>Metazoa</taxon>
        <taxon>Chordata</taxon>
        <taxon>Craniata</taxon>
        <taxon>Vertebrata</taxon>
        <taxon>Euteleostomi</taxon>
        <taxon>Amphibia</taxon>
        <taxon>Batrachia</taxon>
        <taxon>Anura</taxon>
        <taxon>Pipoidea</taxon>
        <taxon>Pipidae</taxon>
        <taxon>Xenopodinae</taxon>
        <taxon>Xenopus</taxon>
        <taxon>Silurana</taxon>
    </lineage>
</organism>
<feature type="chain" id="PRO_0000291851" description="EEF1A lysine methyltransferase 3">
    <location>
        <begin position="1"/>
        <end position="224"/>
    </location>
</feature>
<feature type="binding site" evidence="1">
    <location>
        <position position="58"/>
    </location>
    <ligand>
        <name>S-adenosyl-L-methionine</name>
        <dbReference type="ChEBI" id="CHEBI:59789"/>
    </ligand>
</feature>
<feature type="binding site" evidence="1">
    <location>
        <begin position="84"/>
        <end position="86"/>
    </location>
    <ligand>
        <name>S-adenosyl-L-methionine</name>
        <dbReference type="ChEBI" id="CHEBI:59789"/>
    </ligand>
</feature>
<feature type="binding site" evidence="1">
    <location>
        <position position="105"/>
    </location>
    <ligand>
        <name>S-adenosyl-L-methionine</name>
        <dbReference type="ChEBI" id="CHEBI:59789"/>
    </ligand>
</feature>
<feature type="binding site" evidence="1">
    <location>
        <position position="134"/>
    </location>
    <ligand>
        <name>S-adenosyl-L-methionine</name>
        <dbReference type="ChEBI" id="CHEBI:59789"/>
    </ligand>
</feature>
<feature type="binding site" evidence="1">
    <location>
        <position position="151"/>
    </location>
    <ligand>
        <name>S-adenosyl-L-methionine</name>
        <dbReference type="ChEBI" id="CHEBI:59789"/>
    </ligand>
</feature>
<feature type="splice variant" id="VSP_026272" description="In isoform 2." evidence="2">
    <location>
        <begin position="86"/>
        <end position="97"/>
    </location>
</feature>
<proteinExistence type="evidence at transcript level"/>
<name>EFMT3_XENTR</name>
<comment type="function">
    <text evidence="1">Protein-lysine methyltransferase that selectively mono-, di- and trimethylates 'Lys-165' of the translation elongation factors EEF1A1 and EEF1A2 in an aminoacyl-tRNA and GTP-dependent manner. EEF1A1 methylation by EEF1AKMT3 is dynamic as well as inducible by stress conditions, such as ER-stress, and plays a regulatory role on mRNA translation.</text>
</comment>
<comment type="catalytic activity">
    <reaction evidence="1">
        <text>L-lysyl-[protein] + 3 S-adenosyl-L-methionine = N(6),N(6),N(6)-trimethyl-L-lysyl-[protein] + 3 S-adenosyl-L-homocysteine + 3 H(+)</text>
        <dbReference type="Rhea" id="RHEA:54192"/>
        <dbReference type="Rhea" id="RHEA-COMP:9752"/>
        <dbReference type="Rhea" id="RHEA-COMP:13826"/>
        <dbReference type="ChEBI" id="CHEBI:15378"/>
        <dbReference type="ChEBI" id="CHEBI:29969"/>
        <dbReference type="ChEBI" id="CHEBI:57856"/>
        <dbReference type="ChEBI" id="CHEBI:59789"/>
        <dbReference type="ChEBI" id="CHEBI:61961"/>
    </reaction>
    <physiologicalReaction direction="left-to-right" evidence="1">
        <dbReference type="Rhea" id="RHEA:54193"/>
    </physiologicalReaction>
</comment>
<comment type="catalytic activity">
    <reaction evidence="1">
        <text>L-lysyl-[protein] + S-adenosyl-L-methionine = N(6)-methyl-L-lysyl-[protein] + S-adenosyl-L-homocysteine + H(+)</text>
        <dbReference type="Rhea" id="RHEA:51736"/>
        <dbReference type="Rhea" id="RHEA-COMP:9752"/>
        <dbReference type="Rhea" id="RHEA-COMP:13053"/>
        <dbReference type="ChEBI" id="CHEBI:15378"/>
        <dbReference type="ChEBI" id="CHEBI:29969"/>
        <dbReference type="ChEBI" id="CHEBI:57856"/>
        <dbReference type="ChEBI" id="CHEBI:59789"/>
        <dbReference type="ChEBI" id="CHEBI:61929"/>
    </reaction>
    <physiologicalReaction direction="left-to-right" evidence="1">
        <dbReference type="Rhea" id="RHEA:51737"/>
    </physiologicalReaction>
</comment>
<comment type="catalytic activity">
    <reaction evidence="1">
        <text>N(6)-methyl-L-lysyl-[protein] + S-adenosyl-L-methionine = N(6),N(6)-dimethyl-L-lysyl-[protein] + S-adenosyl-L-homocysteine + H(+)</text>
        <dbReference type="Rhea" id="RHEA:54196"/>
        <dbReference type="Rhea" id="RHEA-COMP:13053"/>
        <dbReference type="Rhea" id="RHEA-COMP:13827"/>
        <dbReference type="ChEBI" id="CHEBI:15378"/>
        <dbReference type="ChEBI" id="CHEBI:57856"/>
        <dbReference type="ChEBI" id="CHEBI:59789"/>
        <dbReference type="ChEBI" id="CHEBI:61929"/>
        <dbReference type="ChEBI" id="CHEBI:61976"/>
    </reaction>
    <physiologicalReaction direction="left-to-right" evidence="1">
        <dbReference type="Rhea" id="RHEA:54197"/>
    </physiologicalReaction>
</comment>
<comment type="catalytic activity">
    <reaction evidence="1">
        <text>N(6),N(6)-dimethyl-L-lysyl-[protein] + S-adenosyl-L-methionine = N(6),N(6),N(6)-trimethyl-L-lysyl-[protein] + S-adenosyl-L-homocysteine + H(+)</text>
        <dbReference type="Rhea" id="RHEA:54200"/>
        <dbReference type="Rhea" id="RHEA-COMP:13826"/>
        <dbReference type="Rhea" id="RHEA-COMP:13827"/>
        <dbReference type="ChEBI" id="CHEBI:15378"/>
        <dbReference type="ChEBI" id="CHEBI:57856"/>
        <dbReference type="ChEBI" id="CHEBI:59789"/>
        <dbReference type="ChEBI" id="CHEBI:61961"/>
        <dbReference type="ChEBI" id="CHEBI:61976"/>
    </reaction>
    <physiologicalReaction direction="left-to-right" evidence="1">
        <dbReference type="Rhea" id="RHEA:54201"/>
    </physiologicalReaction>
</comment>
<comment type="subcellular location">
    <subcellularLocation>
        <location evidence="1">Cytoplasm</location>
    </subcellularLocation>
    <subcellularLocation>
        <location evidence="1">Cytoplasm</location>
        <location evidence="1">Cytoskeleton</location>
        <location evidence="1">Microtubule organizing center</location>
        <location evidence="1">Centrosome</location>
    </subcellularLocation>
</comment>
<comment type="alternative products">
    <event type="alternative splicing"/>
    <isoform>
        <id>Q28IN4-1</id>
        <name>1</name>
        <sequence type="displayed"/>
    </isoform>
    <isoform>
        <id>Q28IN4-2</id>
        <name>2</name>
        <sequence type="described" ref="VSP_026272"/>
    </isoform>
</comment>
<comment type="similarity">
    <text evidence="3">Belongs to the methyltransferase superfamily. METTL21 family.</text>
</comment>
<sequence>MHPEAKEPDCGFSEVLPRELGSLFSDTYTEESHYAFCGTELRITQHYGANLGVAAPVWDAALFLCGYFEEQKLDFKGKKVIELGAGTGIVGILVSLLGGHVTLTDLPHALSQIQKNVSANVSSNNPPQVCALSWGLDQEKFPQDYDFVLGADIVYLHDTYPLLIQTLQYLCGPQTSIFLSSKMRQEHGTMHFFQDILPQYFASELVKRNKDEEINIYKVTRYQN</sequence>
<gene>
    <name evidence="1" type="primary">eef1akmt3</name>
    <name type="synonym">fam119b</name>
    <name type="synonym">mettl21b</name>
    <name type="ORF">TNeu018k12.1</name>
</gene>